<dbReference type="EC" id="3.6.1.54" evidence="1 2"/>
<dbReference type="EMBL" id="AE004091">
    <property type="protein sequence ID" value="AAG05181.1"/>
    <property type="molecule type" value="Genomic_DNA"/>
</dbReference>
<dbReference type="PIR" id="D83421">
    <property type="entry name" value="D83421"/>
</dbReference>
<dbReference type="RefSeq" id="NP_250483.1">
    <property type="nucleotide sequence ID" value="NC_002516.2"/>
</dbReference>
<dbReference type="RefSeq" id="WP_003113585.1">
    <property type="nucleotide sequence ID" value="NZ_QZGE01000003.1"/>
</dbReference>
<dbReference type="PDB" id="5B49">
    <property type="method" value="X-ray"/>
    <property type="resolution" value="1.65 A"/>
    <property type="chains" value="A/B=1-240"/>
</dbReference>
<dbReference type="PDB" id="5B4A">
    <property type="method" value="X-ray"/>
    <property type="resolution" value="1.72 A"/>
    <property type="chains" value="A/B=1-240"/>
</dbReference>
<dbReference type="PDB" id="5B4B">
    <property type="method" value="X-ray"/>
    <property type="resolution" value="1.60 A"/>
    <property type="chains" value="A/B=1-240"/>
</dbReference>
<dbReference type="PDB" id="5B4C">
    <property type="method" value="X-ray"/>
    <property type="resolution" value="1.96 A"/>
    <property type="chains" value="A/B=1-240"/>
</dbReference>
<dbReference type="PDB" id="5B4D">
    <property type="method" value="X-ray"/>
    <property type="resolution" value="1.75 A"/>
    <property type="chains" value="A/B=1-240"/>
</dbReference>
<dbReference type="PDBsum" id="5B49"/>
<dbReference type="PDBsum" id="5B4A"/>
<dbReference type="PDBsum" id="5B4B"/>
<dbReference type="PDBsum" id="5B4C"/>
<dbReference type="PDBsum" id="5B4D"/>
<dbReference type="SMR" id="Q9I2V0"/>
<dbReference type="FunCoup" id="Q9I2V0">
    <property type="interactions" value="208"/>
</dbReference>
<dbReference type="STRING" id="208964.PA1792"/>
<dbReference type="PaxDb" id="208964-PA1792"/>
<dbReference type="DNASU" id="878790"/>
<dbReference type="GeneID" id="878790"/>
<dbReference type="KEGG" id="pae:PA1792"/>
<dbReference type="PATRIC" id="fig|208964.12.peg.1859"/>
<dbReference type="PseudoCAP" id="PA1792"/>
<dbReference type="HOGENOM" id="CLU_074586_0_0_6"/>
<dbReference type="InParanoid" id="Q9I2V0"/>
<dbReference type="OrthoDB" id="9783283at2"/>
<dbReference type="PhylomeDB" id="Q9I2V0"/>
<dbReference type="BioCyc" id="PAER208964:G1FZ6-1824-MONOMER"/>
<dbReference type="BRENDA" id="3.6.1.54">
    <property type="organism ID" value="5087"/>
</dbReference>
<dbReference type="UniPathway" id="UPA00359">
    <property type="reaction ID" value="UER00480"/>
</dbReference>
<dbReference type="Proteomes" id="UP000002438">
    <property type="component" value="Chromosome"/>
</dbReference>
<dbReference type="GO" id="GO:0005737">
    <property type="term" value="C:cytoplasm"/>
    <property type="evidence" value="ECO:0007669"/>
    <property type="project" value="InterPro"/>
</dbReference>
<dbReference type="GO" id="GO:0019897">
    <property type="term" value="C:extrinsic component of plasma membrane"/>
    <property type="evidence" value="ECO:0007669"/>
    <property type="project" value="UniProtKB-UniRule"/>
</dbReference>
<dbReference type="GO" id="GO:0051861">
    <property type="term" value="F:glycolipid binding"/>
    <property type="evidence" value="ECO:0000314"/>
    <property type="project" value="UniProtKB"/>
</dbReference>
<dbReference type="GO" id="GO:0030145">
    <property type="term" value="F:manganese ion binding"/>
    <property type="evidence" value="ECO:0000314"/>
    <property type="project" value="UniProtKB"/>
</dbReference>
<dbReference type="GO" id="GO:0008758">
    <property type="term" value="F:UDP-2,3-diacylglucosamine hydrolase activity"/>
    <property type="evidence" value="ECO:0000314"/>
    <property type="project" value="UniProtKB"/>
</dbReference>
<dbReference type="GO" id="GO:0009245">
    <property type="term" value="P:lipid A biosynthetic process"/>
    <property type="evidence" value="ECO:0000316"/>
    <property type="project" value="UniProtKB"/>
</dbReference>
<dbReference type="CDD" id="cd07398">
    <property type="entry name" value="MPP_YbbF-LpxH"/>
    <property type="match status" value="1"/>
</dbReference>
<dbReference type="FunFam" id="3.60.21.10:FF:000012">
    <property type="entry name" value="UDP-2,3-diacylglucosamine hydrolase"/>
    <property type="match status" value="1"/>
</dbReference>
<dbReference type="Gene3D" id="3.60.21.10">
    <property type="match status" value="1"/>
</dbReference>
<dbReference type="HAMAP" id="MF_00575">
    <property type="entry name" value="LpxH"/>
    <property type="match status" value="1"/>
</dbReference>
<dbReference type="InterPro" id="IPR004843">
    <property type="entry name" value="Calcineurin-like_PHP_ApaH"/>
</dbReference>
<dbReference type="InterPro" id="IPR043461">
    <property type="entry name" value="LpxH-like"/>
</dbReference>
<dbReference type="InterPro" id="IPR029052">
    <property type="entry name" value="Metallo-depent_PP-like"/>
</dbReference>
<dbReference type="InterPro" id="IPR010138">
    <property type="entry name" value="UDP-diacylglucosamine_Hdrlase"/>
</dbReference>
<dbReference type="NCBIfam" id="TIGR01854">
    <property type="entry name" value="lipid_A_lpxH"/>
    <property type="match status" value="1"/>
</dbReference>
<dbReference type="NCBIfam" id="NF003743">
    <property type="entry name" value="PRK05340.1"/>
    <property type="match status" value="1"/>
</dbReference>
<dbReference type="PANTHER" id="PTHR34990:SF1">
    <property type="entry name" value="UDP-2,3-DIACYLGLUCOSAMINE HYDROLASE"/>
    <property type="match status" value="1"/>
</dbReference>
<dbReference type="PANTHER" id="PTHR34990">
    <property type="entry name" value="UDP-2,3-DIACYLGLUCOSAMINE HYDROLASE-RELATED"/>
    <property type="match status" value="1"/>
</dbReference>
<dbReference type="Pfam" id="PF00149">
    <property type="entry name" value="Metallophos"/>
    <property type="match status" value="1"/>
</dbReference>
<dbReference type="SUPFAM" id="SSF56300">
    <property type="entry name" value="Metallo-dependent phosphatases"/>
    <property type="match status" value="1"/>
</dbReference>
<keyword id="KW-0002">3D-structure</keyword>
<keyword id="KW-0997">Cell inner membrane</keyword>
<keyword id="KW-1003">Cell membrane</keyword>
<keyword id="KW-0378">Hydrolase</keyword>
<keyword id="KW-0441">Lipid A biosynthesis</keyword>
<keyword id="KW-0444">Lipid biosynthesis</keyword>
<keyword id="KW-0443">Lipid metabolism</keyword>
<keyword id="KW-0464">Manganese</keyword>
<keyword id="KW-0472">Membrane</keyword>
<keyword id="KW-0479">Metal-binding</keyword>
<keyword id="KW-1185">Reference proteome</keyword>
<accession>Q9I2V0</accession>
<protein>
    <recommendedName>
        <fullName evidence="1 4">UDP-2,3-diacylglucosamine hydrolase</fullName>
        <ecNumber evidence="1 2">3.6.1.54</ecNumber>
    </recommendedName>
    <alternativeName>
        <fullName evidence="1">UDP-2,3-diacylglucosamine diphosphatase</fullName>
    </alternativeName>
</protein>
<name>LPXH_PSEAE</name>
<sequence length="240" mass="27555">MSVLFISDLHLEAERPDITRAFLSFLDERARRAEALYILGDFFEAWIGDDGMDAFQRSIAQSLRQVADGGTRIYLMHGNRDFLIGKAFCREAGCTLLPDPSVIDLYGEPVLLMHGDSLCTRDEAYMRLRRWLRNPLTLWVLRHLPLATRHKLARKLRKESRAQTRMKAVDIIDVTPEEVPRVMRGHGVRTLIHGHTHRPAEHPLDIDGQPARRIVLGDWDRQGWALEIDANGHRQAPFPL</sequence>
<evidence type="ECO:0000255" key="1">
    <source>
        <dbReference type="HAMAP-Rule" id="MF_00575"/>
    </source>
</evidence>
<evidence type="ECO:0000269" key="2">
    <source>
    </source>
</evidence>
<evidence type="ECO:0000269" key="3">
    <source>
    </source>
</evidence>
<evidence type="ECO:0000303" key="4">
    <source>
    </source>
</evidence>
<evidence type="ECO:0000305" key="5">
    <source>
    </source>
</evidence>
<evidence type="ECO:0000305" key="6">
    <source>
    </source>
</evidence>
<evidence type="ECO:0007744" key="7">
    <source>
        <dbReference type="PDB" id="5B49"/>
    </source>
</evidence>
<evidence type="ECO:0007744" key="8">
    <source>
        <dbReference type="PDB" id="5B4B"/>
    </source>
</evidence>
<evidence type="ECO:0007744" key="9">
    <source>
        <dbReference type="PDB" id="5B4C"/>
    </source>
</evidence>
<evidence type="ECO:0007829" key="10">
    <source>
        <dbReference type="PDB" id="5B4B"/>
    </source>
</evidence>
<proteinExistence type="evidence at protein level"/>
<reference key="1">
    <citation type="journal article" date="2000" name="Nature">
        <title>Complete genome sequence of Pseudomonas aeruginosa PAO1, an opportunistic pathogen.</title>
        <authorList>
            <person name="Stover C.K."/>
            <person name="Pham X.-Q.T."/>
            <person name="Erwin A.L."/>
            <person name="Mizoguchi S.D."/>
            <person name="Warrener P."/>
            <person name="Hickey M.J."/>
            <person name="Brinkman F.S.L."/>
            <person name="Hufnagle W.O."/>
            <person name="Kowalik D.J."/>
            <person name="Lagrou M."/>
            <person name="Garber R.L."/>
            <person name="Goltry L."/>
            <person name="Tolentino E."/>
            <person name="Westbrock-Wadman S."/>
            <person name="Yuan Y."/>
            <person name="Brody L.L."/>
            <person name="Coulter S.N."/>
            <person name="Folger K.R."/>
            <person name="Kas A."/>
            <person name="Larbig K."/>
            <person name="Lim R.M."/>
            <person name="Smith K.A."/>
            <person name="Spencer D.H."/>
            <person name="Wong G.K.-S."/>
            <person name="Wu Z."/>
            <person name="Paulsen I.T."/>
            <person name="Reizer J."/>
            <person name="Saier M.H. Jr."/>
            <person name="Hancock R.E.W."/>
            <person name="Lory S."/>
            <person name="Olson M.V."/>
        </authorList>
    </citation>
    <scope>NUCLEOTIDE SEQUENCE [LARGE SCALE GENOMIC DNA]</scope>
    <source>
        <strain>ATCC 15692 / DSM 22644 / CIP 104116 / JCM 14847 / LMG 12228 / 1C / PRS 101 / PAO1</strain>
    </source>
</reference>
<reference key="2">
    <citation type="journal article" date="2002" name="J. Biol. Chem.">
        <title>Accumulation of the lipid A precursor UDP-2,3-diacylglucosamine in an Escherichia coli mutant lacking the lpxH gene.</title>
        <authorList>
            <person name="Babinski K.J."/>
            <person name="Kanjilal S.J."/>
            <person name="Raetz C.R.H."/>
        </authorList>
    </citation>
    <scope>FUNCTION</scope>
    <scope>CATALYTIC ACTIVITY</scope>
    <scope>PATHWAY</scope>
    <source>
        <strain>ATCC 15692 / DSM 22644 / CIP 104116 / JCM 14847 / LMG 12228 / 1C / PRS 101 / PAO1</strain>
    </source>
</reference>
<reference key="3">
    <citation type="journal article" date="2016" name="Sci. Rep.">
        <title>Crystal structures of the UDP-diacylglucosamine pyrophosphohydrase LpxH from Pseudomonas aeruginosa.</title>
        <authorList>
            <person name="Okada C."/>
            <person name="Wakabayashi H."/>
            <person name="Kobayashi M."/>
            <person name="Shinoda A."/>
            <person name="Tanaka I."/>
            <person name="Yao M."/>
        </authorList>
    </citation>
    <scope>X-RAY CRYSTALLOGRAPHY (1.60 ANGSTROMS) OF WILD-TYPE AND MUTANT ASN-10 IN COMPLEXES WITH MANGANESE AND ITS PRODUCT LIPID X</scope>
    <scope>COFACTOR</scope>
    <scope>DOMAIN</scope>
    <scope>MUTAGENESIS OF HIS-10</scope>
    <scope>REACTION MECHANISM</scope>
</reference>
<comment type="function">
    <text evidence="1 2">Hydrolyzes the pyrophosphate bond of UDP-2,3-diacylglucosamine to yield 2,3-diacylglucosamine 1-phosphate (lipid X) and UMP by catalyzing the attack of water at the alpha-P atom. Involved in the biosynthesis of lipid A, a phosphorylated glycolipid that anchors the lipopolysaccharide to the outer membrane of the cell. Can functionally complement lpxH deficiency in E.coli.</text>
</comment>
<comment type="catalytic activity">
    <reaction evidence="1 2">
        <text>UDP-2-N,3-O-bis[(3R)-3-hydroxytetradecanoyl]-alpha-D-glucosamine + H2O = 2-N,3-O-bis[(3R)-3-hydroxytetradecanoyl]-alpha-D-glucosaminyl 1-phosphate + UMP + 2 H(+)</text>
        <dbReference type="Rhea" id="RHEA:25213"/>
        <dbReference type="ChEBI" id="CHEBI:15377"/>
        <dbReference type="ChEBI" id="CHEBI:15378"/>
        <dbReference type="ChEBI" id="CHEBI:57865"/>
        <dbReference type="ChEBI" id="CHEBI:57957"/>
        <dbReference type="ChEBI" id="CHEBI:78847"/>
        <dbReference type="EC" id="3.6.1.54"/>
    </reaction>
</comment>
<comment type="cofactor">
    <cofactor evidence="1 6">
        <name>Mn(2+)</name>
        <dbReference type="ChEBI" id="CHEBI:29035"/>
    </cofactor>
    <text evidence="1 3">Binds 2 Mn(2+) ions per subunit in a binuclear metal center.</text>
</comment>
<comment type="pathway">
    <text evidence="1 5">Glycolipid biosynthesis; lipid IV(A) biosynthesis; lipid IV(A) from (3R)-3-hydroxytetradecanoyl-[acyl-carrier-protein] and UDP-N-acetyl-alpha-D-glucosamine: step 4/6.</text>
</comment>
<comment type="subcellular location">
    <subcellularLocation>
        <location evidence="1">Cell inner membrane</location>
        <topology evidence="1">Peripheral membrane protein</topology>
        <orientation evidence="1">Cytoplasmic side</orientation>
    </subcellularLocation>
</comment>
<comment type="domain">
    <text evidence="3">Consists of two domains: a catalytic domain homologous to metallophosphoesterases (MPEs) and a helical insertion domain (HI domain) inserted in the middle of the catalytic domain.</text>
</comment>
<comment type="similarity">
    <text evidence="1">Belongs to the LpxH family.</text>
</comment>
<feature type="chain" id="PRO_0000214117" description="UDP-2,3-diacylglucosamine hydrolase">
    <location>
        <begin position="1"/>
        <end position="240"/>
    </location>
</feature>
<feature type="binding site" evidence="3 7">
    <location>
        <position position="8"/>
    </location>
    <ligand>
        <name>Mn(2+)</name>
        <dbReference type="ChEBI" id="CHEBI:29035"/>
        <label>1</label>
    </ligand>
</feature>
<feature type="binding site" evidence="3 7">
    <location>
        <position position="10"/>
    </location>
    <ligand>
        <name>Mn(2+)</name>
        <dbReference type="ChEBI" id="CHEBI:29035"/>
        <label>1</label>
    </ligand>
</feature>
<feature type="binding site" evidence="3 7">
    <location>
        <position position="41"/>
    </location>
    <ligand>
        <name>Mn(2+)</name>
        <dbReference type="ChEBI" id="CHEBI:29035"/>
        <label>1</label>
    </ligand>
</feature>
<feature type="binding site" evidence="3 9">
    <location>
        <position position="41"/>
    </location>
    <ligand>
        <name>Mn(2+)</name>
        <dbReference type="ChEBI" id="CHEBI:29035"/>
        <label>2</label>
    </ligand>
</feature>
<feature type="binding site" evidence="6 8">
    <location>
        <begin position="79"/>
        <end position="80"/>
    </location>
    <ligand>
        <name>substrate</name>
    </ligand>
</feature>
<feature type="binding site" evidence="3 9">
    <location>
        <position position="79"/>
    </location>
    <ligand>
        <name>Mn(2+)</name>
        <dbReference type="ChEBI" id="CHEBI:29035"/>
        <label>2</label>
    </ligand>
</feature>
<feature type="binding site" evidence="3 9">
    <location>
        <position position="114"/>
    </location>
    <ligand>
        <name>Mn(2+)</name>
        <dbReference type="ChEBI" id="CHEBI:29035"/>
        <label>2</label>
    </ligand>
</feature>
<feature type="binding site" evidence="6 8">
    <location>
        <position position="122"/>
    </location>
    <ligand>
        <name>substrate</name>
    </ligand>
</feature>
<feature type="binding site" evidence="6 8">
    <location>
        <begin position="157"/>
        <end position="167"/>
    </location>
    <ligand>
        <name>substrate</name>
    </ligand>
</feature>
<feature type="binding site" evidence="3 9">
    <location>
        <position position="195"/>
    </location>
    <ligand>
        <name>Mn(2+)</name>
        <dbReference type="ChEBI" id="CHEBI:29035"/>
        <label>2</label>
    </ligand>
</feature>
<feature type="binding site" evidence="6 8">
    <location>
        <position position="195"/>
    </location>
    <ligand>
        <name>substrate</name>
    </ligand>
</feature>
<feature type="binding site" evidence="3 7">
    <location>
        <position position="197"/>
    </location>
    <ligand>
        <name>Mn(2+)</name>
        <dbReference type="ChEBI" id="CHEBI:29035"/>
        <label>1</label>
    </ligand>
</feature>
<feature type="mutagenesis site" description="Does not bind to Mn 1." evidence="3">
    <original>H</original>
    <variation>N</variation>
    <location>
        <position position="10"/>
    </location>
</feature>
<feature type="strand" evidence="10">
    <location>
        <begin position="3"/>
        <end position="6"/>
    </location>
</feature>
<feature type="helix" evidence="10">
    <location>
        <begin position="16"/>
        <end position="28"/>
    </location>
</feature>
<feature type="helix" evidence="10">
    <location>
        <begin position="30"/>
        <end position="32"/>
    </location>
</feature>
<feature type="strand" evidence="10">
    <location>
        <begin position="33"/>
        <end position="40"/>
    </location>
</feature>
<feature type="helix" evidence="10">
    <location>
        <begin position="49"/>
        <end position="51"/>
    </location>
</feature>
<feature type="helix" evidence="10">
    <location>
        <begin position="54"/>
        <end position="68"/>
    </location>
</feature>
<feature type="strand" evidence="10">
    <location>
        <begin position="72"/>
        <end position="76"/>
    </location>
</feature>
<feature type="turn" evidence="10">
    <location>
        <begin position="79"/>
        <end position="83"/>
    </location>
</feature>
<feature type="helix" evidence="10">
    <location>
        <begin position="86"/>
        <end position="92"/>
    </location>
</feature>
<feature type="strand" evidence="10">
    <location>
        <begin position="94"/>
        <end position="97"/>
    </location>
</feature>
<feature type="strand" evidence="10">
    <location>
        <begin position="99"/>
        <end position="105"/>
    </location>
</feature>
<feature type="strand" evidence="10">
    <location>
        <begin position="108"/>
        <end position="112"/>
    </location>
</feature>
<feature type="helix" evidence="10">
    <location>
        <begin position="116"/>
        <end position="118"/>
    </location>
</feature>
<feature type="helix" evidence="10">
    <location>
        <begin position="123"/>
        <end position="132"/>
    </location>
</feature>
<feature type="helix" evidence="10">
    <location>
        <begin position="135"/>
        <end position="142"/>
    </location>
</feature>
<feature type="helix" evidence="10">
    <location>
        <begin position="146"/>
        <end position="164"/>
    </location>
</feature>
<feature type="helix" evidence="10">
    <location>
        <begin position="169"/>
        <end position="172"/>
    </location>
</feature>
<feature type="helix" evidence="10">
    <location>
        <begin position="178"/>
        <end position="186"/>
    </location>
</feature>
<feature type="strand" evidence="10">
    <location>
        <begin position="189"/>
        <end position="193"/>
    </location>
</feature>
<feature type="strand" evidence="10">
    <location>
        <begin position="195"/>
        <end position="197"/>
    </location>
</feature>
<feature type="strand" evidence="10">
    <location>
        <begin position="200"/>
        <end position="206"/>
    </location>
</feature>
<feature type="strand" evidence="10">
    <location>
        <begin position="209"/>
        <end position="215"/>
    </location>
</feature>
<feature type="strand" evidence="10">
    <location>
        <begin position="219"/>
        <end position="229"/>
    </location>
</feature>
<feature type="strand" evidence="10">
    <location>
        <begin position="232"/>
        <end position="238"/>
    </location>
</feature>
<organism>
    <name type="scientific">Pseudomonas aeruginosa (strain ATCC 15692 / DSM 22644 / CIP 104116 / JCM 14847 / LMG 12228 / 1C / PRS 101 / PAO1)</name>
    <dbReference type="NCBI Taxonomy" id="208964"/>
    <lineage>
        <taxon>Bacteria</taxon>
        <taxon>Pseudomonadati</taxon>
        <taxon>Pseudomonadota</taxon>
        <taxon>Gammaproteobacteria</taxon>
        <taxon>Pseudomonadales</taxon>
        <taxon>Pseudomonadaceae</taxon>
        <taxon>Pseudomonas</taxon>
    </lineage>
</organism>
<gene>
    <name evidence="1 4" type="primary">lpxH</name>
    <name type="ordered locus">PA1792</name>
</gene>